<accession>Q21X56</accession>
<proteinExistence type="inferred from homology"/>
<evidence type="ECO:0000255" key="1">
    <source>
        <dbReference type="HAMAP-Rule" id="MF_00012"/>
    </source>
</evidence>
<comment type="function">
    <text evidence="1">Functions in the biosynthesis of branched-chain amino acids. Catalyzes the dehydration of (2R,3R)-2,3-dihydroxy-3-methylpentanoate (2,3-dihydroxy-3-methylvalerate) into 2-oxo-3-methylpentanoate (2-oxo-3-methylvalerate) and of (2R)-2,3-dihydroxy-3-methylbutanoate (2,3-dihydroxyisovalerate) into 2-oxo-3-methylbutanoate (2-oxoisovalerate), the penultimate precursor to L-isoleucine and L-valine, respectively.</text>
</comment>
<comment type="catalytic activity">
    <reaction evidence="1">
        <text>(2R)-2,3-dihydroxy-3-methylbutanoate = 3-methyl-2-oxobutanoate + H2O</text>
        <dbReference type="Rhea" id="RHEA:24809"/>
        <dbReference type="ChEBI" id="CHEBI:11851"/>
        <dbReference type="ChEBI" id="CHEBI:15377"/>
        <dbReference type="ChEBI" id="CHEBI:49072"/>
        <dbReference type="EC" id="4.2.1.9"/>
    </reaction>
    <physiologicalReaction direction="left-to-right" evidence="1">
        <dbReference type="Rhea" id="RHEA:24810"/>
    </physiologicalReaction>
</comment>
<comment type="catalytic activity">
    <reaction evidence="1">
        <text>(2R,3R)-2,3-dihydroxy-3-methylpentanoate = (S)-3-methyl-2-oxopentanoate + H2O</text>
        <dbReference type="Rhea" id="RHEA:27694"/>
        <dbReference type="ChEBI" id="CHEBI:15377"/>
        <dbReference type="ChEBI" id="CHEBI:35146"/>
        <dbReference type="ChEBI" id="CHEBI:49258"/>
        <dbReference type="EC" id="4.2.1.9"/>
    </reaction>
    <physiologicalReaction direction="left-to-right" evidence="1">
        <dbReference type="Rhea" id="RHEA:27695"/>
    </physiologicalReaction>
</comment>
<comment type="cofactor">
    <cofactor evidence="1">
        <name>[2Fe-2S] cluster</name>
        <dbReference type="ChEBI" id="CHEBI:190135"/>
    </cofactor>
    <text evidence="1">Binds 1 [2Fe-2S] cluster per subunit. This cluster acts as a Lewis acid cofactor.</text>
</comment>
<comment type="cofactor">
    <cofactor evidence="1">
        <name>Mg(2+)</name>
        <dbReference type="ChEBI" id="CHEBI:18420"/>
    </cofactor>
</comment>
<comment type="pathway">
    <text evidence="1">Amino-acid biosynthesis; L-isoleucine biosynthesis; L-isoleucine from 2-oxobutanoate: step 3/4.</text>
</comment>
<comment type="pathway">
    <text evidence="1">Amino-acid biosynthesis; L-valine biosynthesis; L-valine from pyruvate: step 3/4.</text>
</comment>
<comment type="subunit">
    <text evidence="1">Homodimer.</text>
</comment>
<comment type="similarity">
    <text evidence="1">Belongs to the IlvD/Edd family.</text>
</comment>
<reference key="1">
    <citation type="submission" date="2006-02" db="EMBL/GenBank/DDBJ databases">
        <title>Complete sequence of chromosome of Rhodoferax ferrireducens DSM 15236.</title>
        <authorList>
            <person name="Copeland A."/>
            <person name="Lucas S."/>
            <person name="Lapidus A."/>
            <person name="Barry K."/>
            <person name="Detter J.C."/>
            <person name="Glavina del Rio T."/>
            <person name="Hammon N."/>
            <person name="Israni S."/>
            <person name="Pitluck S."/>
            <person name="Brettin T."/>
            <person name="Bruce D."/>
            <person name="Han C."/>
            <person name="Tapia R."/>
            <person name="Gilna P."/>
            <person name="Kiss H."/>
            <person name="Schmutz J."/>
            <person name="Larimer F."/>
            <person name="Land M."/>
            <person name="Kyrpides N."/>
            <person name="Ivanova N."/>
            <person name="Richardson P."/>
        </authorList>
    </citation>
    <scope>NUCLEOTIDE SEQUENCE [LARGE SCALE GENOMIC DNA]</scope>
    <source>
        <strain>ATCC BAA-621 / DSM 15236 / T118</strain>
    </source>
</reference>
<dbReference type="EC" id="4.2.1.9" evidence="1"/>
<dbReference type="EMBL" id="CP000267">
    <property type="protein sequence ID" value="ABD69647.1"/>
    <property type="molecule type" value="Genomic_DNA"/>
</dbReference>
<dbReference type="RefSeq" id="WP_011464215.1">
    <property type="nucleotide sequence ID" value="NC_007908.1"/>
</dbReference>
<dbReference type="SMR" id="Q21X56"/>
<dbReference type="STRING" id="338969.Rfer_1921"/>
<dbReference type="KEGG" id="rfr:Rfer_1921"/>
<dbReference type="eggNOG" id="COG0129">
    <property type="taxonomic scope" value="Bacteria"/>
</dbReference>
<dbReference type="HOGENOM" id="CLU_014271_4_2_4"/>
<dbReference type="OrthoDB" id="9807077at2"/>
<dbReference type="UniPathway" id="UPA00047">
    <property type="reaction ID" value="UER00057"/>
</dbReference>
<dbReference type="UniPathway" id="UPA00049">
    <property type="reaction ID" value="UER00061"/>
</dbReference>
<dbReference type="Proteomes" id="UP000008332">
    <property type="component" value="Chromosome"/>
</dbReference>
<dbReference type="GO" id="GO:0051537">
    <property type="term" value="F:2 iron, 2 sulfur cluster binding"/>
    <property type="evidence" value="ECO:0007669"/>
    <property type="project" value="UniProtKB-UniRule"/>
</dbReference>
<dbReference type="GO" id="GO:0004160">
    <property type="term" value="F:dihydroxy-acid dehydratase activity"/>
    <property type="evidence" value="ECO:0007669"/>
    <property type="project" value="UniProtKB-UniRule"/>
</dbReference>
<dbReference type="GO" id="GO:0000287">
    <property type="term" value="F:magnesium ion binding"/>
    <property type="evidence" value="ECO:0007669"/>
    <property type="project" value="UniProtKB-UniRule"/>
</dbReference>
<dbReference type="GO" id="GO:0009097">
    <property type="term" value="P:isoleucine biosynthetic process"/>
    <property type="evidence" value="ECO:0007669"/>
    <property type="project" value="UniProtKB-UniRule"/>
</dbReference>
<dbReference type="GO" id="GO:0009099">
    <property type="term" value="P:L-valine biosynthetic process"/>
    <property type="evidence" value="ECO:0007669"/>
    <property type="project" value="UniProtKB-UniRule"/>
</dbReference>
<dbReference type="FunFam" id="3.50.30.80:FF:000001">
    <property type="entry name" value="Dihydroxy-acid dehydratase"/>
    <property type="match status" value="1"/>
</dbReference>
<dbReference type="Gene3D" id="3.50.30.80">
    <property type="entry name" value="IlvD/EDD C-terminal domain-like"/>
    <property type="match status" value="1"/>
</dbReference>
<dbReference type="HAMAP" id="MF_00012">
    <property type="entry name" value="IlvD"/>
    <property type="match status" value="1"/>
</dbReference>
<dbReference type="InterPro" id="IPR050165">
    <property type="entry name" value="DHAD_IlvD/Edd"/>
</dbReference>
<dbReference type="InterPro" id="IPR042096">
    <property type="entry name" value="Dihydro-acid_dehy_C"/>
</dbReference>
<dbReference type="InterPro" id="IPR004404">
    <property type="entry name" value="DihydroxyA_deHydtase"/>
</dbReference>
<dbReference type="InterPro" id="IPR020558">
    <property type="entry name" value="DiOHA_6PGluconate_deHydtase_CS"/>
</dbReference>
<dbReference type="InterPro" id="IPR056740">
    <property type="entry name" value="ILV_EDD_C"/>
</dbReference>
<dbReference type="InterPro" id="IPR000581">
    <property type="entry name" value="ILV_EDD_N"/>
</dbReference>
<dbReference type="InterPro" id="IPR037237">
    <property type="entry name" value="IlvD/EDD_N"/>
</dbReference>
<dbReference type="NCBIfam" id="TIGR00110">
    <property type="entry name" value="ilvD"/>
    <property type="match status" value="1"/>
</dbReference>
<dbReference type="NCBIfam" id="NF002068">
    <property type="entry name" value="PRK00911.1"/>
    <property type="match status" value="1"/>
</dbReference>
<dbReference type="PANTHER" id="PTHR21000">
    <property type="entry name" value="DIHYDROXY-ACID DEHYDRATASE DAD"/>
    <property type="match status" value="1"/>
</dbReference>
<dbReference type="PANTHER" id="PTHR21000:SF5">
    <property type="entry name" value="DIHYDROXY-ACID DEHYDRATASE, MITOCHONDRIAL"/>
    <property type="match status" value="1"/>
</dbReference>
<dbReference type="Pfam" id="PF24877">
    <property type="entry name" value="ILV_EDD_C"/>
    <property type="match status" value="1"/>
</dbReference>
<dbReference type="Pfam" id="PF00920">
    <property type="entry name" value="ILVD_EDD_N"/>
    <property type="match status" value="1"/>
</dbReference>
<dbReference type="SUPFAM" id="SSF143975">
    <property type="entry name" value="IlvD/EDD N-terminal domain-like"/>
    <property type="match status" value="1"/>
</dbReference>
<dbReference type="SUPFAM" id="SSF52016">
    <property type="entry name" value="LeuD/IlvD-like"/>
    <property type="match status" value="1"/>
</dbReference>
<dbReference type="PROSITE" id="PS00886">
    <property type="entry name" value="ILVD_EDD_1"/>
    <property type="match status" value="1"/>
</dbReference>
<dbReference type="PROSITE" id="PS00887">
    <property type="entry name" value="ILVD_EDD_2"/>
    <property type="match status" value="1"/>
</dbReference>
<keyword id="KW-0001">2Fe-2S</keyword>
<keyword id="KW-0028">Amino-acid biosynthesis</keyword>
<keyword id="KW-0100">Branched-chain amino acid biosynthesis</keyword>
<keyword id="KW-0408">Iron</keyword>
<keyword id="KW-0411">Iron-sulfur</keyword>
<keyword id="KW-0456">Lyase</keyword>
<keyword id="KW-0460">Magnesium</keyword>
<keyword id="KW-0479">Metal-binding</keyword>
<keyword id="KW-1185">Reference proteome</keyword>
<protein>
    <recommendedName>
        <fullName evidence="1">Dihydroxy-acid dehydratase</fullName>
        <shortName evidence="1">DAD</shortName>
        <ecNumber evidence="1">4.2.1.9</ecNumber>
    </recommendedName>
</protein>
<gene>
    <name evidence="1" type="primary">ilvD</name>
    <name type="ordered locus">Rfer_1921</name>
</gene>
<name>ILVD_ALBFT</name>
<organism>
    <name type="scientific">Albidiferax ferrireducens (strain ATCC BAA-621 / DSM 15236 / T118)</name>
    <name type="common">Rhodoferax ferrireducens</name>
    <dbReference type="NCBI Taxonomy" id="338969"/>
    <lineage>
        <taxon>Bacteria</taxon>
        <taxon>Pseudomonadati</taxon>
        <taxon>Pseudomonadota</taxon>
        <taxon>Betaproteobacteria</taxon>
        <taxon>Burkholderiales</taxon>
        <taxon>Comamonadaceae</taxon>
        <taxon>Rhodoferax</taxon>
    </lineage>
</organism>
<feature type="chain" id="PRO_0000321603" description="Dihydroxy-acid dehydratase">
    <location>
        <begin position="1"/>
        <end position="564"/>
    </location>
</feature>
<feature type="active site" description="Proton acceptor" evidence="1">
    <location>
        <position position="478"/>
    </location>
</feature>
<feature type="binding site" evidence="1">
    <location>
        <position position="55"/>
    </location>
    <ligand>
        <name>[2Fe-2S] cluster</name>
        <dbReference type="ChEBI" id="CHEBI:190135"/>
    </ligand>
</feature>
<feature type="binding site" evidence="1">
    <location>
        <position position="87"/>
    </location>
    <ligand>
        <name>Mg(2+)</name>
        <dbReference type="ChEBI" id="CHEBI:18420"/>
    </ligand>
</feature>
<feature type="binding site" evidence="1">
    <location>
        <position position="128"/>
    </location>
    <ligand>
        <name>[2Fe-2S] cluster</name>
        <dbReference type="ChEBI" id="CHEBI:190135"/>
    </ligand>
</feature>
<feature type="binding site" evidence="1">
    <location>
        <position position="129"/>
    </location>
    <ligand>
        <name>Mg(2+)</name>
        <dbReference type="ChEBI" id="CHEBI:18420"/>
    </ligand>
</feature>
<feature type="binding site" description="via carbamate group" evidence="1">
    <location>
        <position position="130"/>
    </location>
    <ligand>
        <name>Mg(2+)</name>
        <dbReference type="ChEBI" id="CHEBI:18420"/>
    </ligand>
</feature>
<feature type="binding site" evidence="1">
    <location>
        <position position="200"/>
    </location>
    <ligand>
        <name>[2Fe-2S] cluster</name>
        <dbReference type="ChEBI" id="CHEBI:190135"/>
    </ligand>
</feature>
<feature type="binding site" evidence="1">
    <location>
        <position position="452"/>
    </location>
    <ligand>
        <name>Mg(2+)</name>
        <dbReference type="ChEBI" id="CHEBI:18420"/>
    </ligand>
</feature>
<feature type="modified residue" description="N6-carboxylysine" evidence="1">
    <location>
        <position position="130"/>
    </location>
</feature>
<sequence length="564" mass="59502">MDIKPVILNPRSKNITEGKSRAPNRSMYYAMGYEADDFKKPMIGVANGHSTITPCNSGLQKLADAAIAAIEEAGGNAQVFGTPTISDGMSMGTEGMKYSLVSREVISDCIETCVQGQWMDGVLVIGGCDKNMPGGLMGMLRANVPAIYVYGGTILPGHYKGQDLNIVSVFEAVGENAAGRMSDEDLLEIERRAIPGPGSCGGMYTANTMSSAFEALGISLVYSSTMANPHDEKLNSAQESAKVLIEAIKNDLKPRDIVTRKSIENAIAVVMAIGGSTNAVLHFLAIAHAAGVEWTIDDFERVRQKTPVLCDLKPSGKYLAVDLHRAGGIPQVMKMLLSAGLLHGDCITITGQTVAEVLKDVPDAPRADQNVIRPMNKPMYAQGHLAILKGNLAPEGCVAKITGLKNPVMTGPARVFEDEQSALAAILANKIVAGDVMVLRYLGPKGGPGMPEMLAPTGALVGQGLGESVGLITDGRFSGGTWGMVVGHVAPEAAAGGLIALIEEGDSITIDAHQLLLQLNVSDDIIAKRRSVWTAPQPRYTRGVQAKFAFNASTASKGAVLDNY</sequence>